<evidence type="ECO:0000255" key="1">
    <source>
        <dbReference type="HAMAP-Rule" id="MF_00171"/>
    </source>
</evidence>
<sequence length="267" mass="31356">MRILVEIAYQGNNFLGFQIQQNGRTVQQQFEKLLQRMHKRHVRIHPSSRTDRGVHAIQQYFHFDTELNIPMSQWQYAMNRTLPDDIYVNNVVTVDDDFHCRYDCVGKRYRYKVYQAQHRDPFQSGLKTFIPETLDLDKMNRAAQQFIGTHDFTGFCSQKTEVESKVRTLYQSEIVKTDDGFDYIVTGSGFLYNMVRVLVAFLIEVGKGRHEISDVPKLLESKNRKNVPFTATAEGLYLEKIYLDENELLKDFGNDIKIHRKKSLQND</sequence>
<name>TRUA_STAAW</name>
<organism>
    <name type="scientific">Staphylococcus aureus (strain MW2)</name>
    <dbReference type="NCBI Taxonomy" id="196620"/>
    <lineage>
        <taxon>Bacteria</taxon>
        <taxon>Bacillati</taxon>
        <taxon>Bacillota</taxon>
        <taxon>Bacilli</taxon>
        <taxon>Bacillales</taxon>
        <taxon>Staphylococcaceae</taxon>
        <taxon>Staphylococcus</taxon>
    </lineage>
</organism>
<gene>
    <name evidence="1" type="primary">truA</name>
    <name type="ordered locus">MW2138</name>
</gene>
<keyword id="KW-0413">Isomerase</keyword>
<keyword id="KW-0819">tRNA processing</keyword>
<protein>
    <recommendedName>
        <fullName evidence="1">tRNA pseudouridine synthase A</fullName>
        <ecNumber evidence="1">5.4.99.12</ecNumber>
    </recommendedName>
    <alternativeName>
        <fullName evidence="1">tRNA pseudouridine(38-40) synthase</fullName>
    </alternativeName>
    <alternativeName>
        <fullName evidence="1">tRNA pseudouridylate synthase I</fullName>
    </alternativeName>
    <alternativeName>
        <fullName evidence="1">tRNA-uridine isomerase I</fullName>
    </alternativeName>
</protein>
<comment type="function">
    <text evidence="1">Formation of pseudouridine at positions 38, 39 and 40 in the anticodon stem and loop of transfer RNAs.</text>
</comment>
<comment type="catalytic activity">
    <reaction evidence="1">
        <text>uridine(38/39/40) in tRNA = pseudouridine(38/39/40) in tRNA</text>
        <dbReference type="Rhea" id="RHEA:22376"/>
        <dbReference type="Rhea" id="RHEA-COMP:10085"/>
        <dbReference type="Rhea" id="RHEA-COMP:10087"/>
        <dbReference type="ChEBI" id="CHEBI:65314"/>
        <dbReference type="ChEBI" id="CHEBI:65315"/>
        <dbReference type="EC" id="5.4.99.12"/>
    </reaction>
</comment>
<comment type="subunit">
    <text evidence="1">Homodimer.</text>
</comment>
<comment type="similarity">
    <text evidence="1">Belongs to the tRNA pseudouridine synthase TruA family.</text>
</comment>
<accession>Q8NVB7</accession>
<reference key="1">
    <citation type="journal article" date="2002" name="Lancet">
        <title>Genome and virulence determinants of high virulence community-acquired MRSA.</title>
        <authorList>
            <person name="Baba T."/>
            <person name="Takeuchi F."/>
            <person name="Kuroda M."/>
            <person name="Yuzawa H."/>
            <person name="Aoki K."/>
            <person name="Oguchi A."/>
            <person name="Nagai Y."/>
            <person name="Iwama N."/>
            <person name="Asano K."/>
            <person name="Naimi T."/>
            <person name="Kuroda H."/>
            <person name="Cui L."/>
            <person name="Yamamoto K."/>
            <person name="Hiramatsu K."/>
        </authorList>
    </citation>
    <scope>NUCLEOTIDE SEQUENCE [LARGE SCALE GENOMIC DNA]</scope>
    <source>
        <strain>MW2</strain>
    </source>
</reference>
<feature type="chain" id="PRO_0000057454" description="tRNA pseudouridine synthase A">
    <location>
        <begin position="1"/>
        <end position="267"/>
    </location>
</feature>
<feature type="active site" description="Nucleophile" evidence="1">
    <location>
        <position position="51"/>
    </location>
</feature>
<feature type="binding site" evidence="1">
    <location>
        <position position="109"/>
    </location>
    <ligand>
        <name>substrate</name>
    </ligand>
</feature>
<dbReference type="EC" id="5.4.99.12" evidence="1"/>
<dbReference type="EMBL" id="BA000033">
    <property type="protein sequence ID" value="BAB96003.1"/>
    <property type="molecule type" value="Genomic_DNA"/>
</dbReference>
<dbReference type="RefSeq" id="WP_001221855.1">
    <property type="nucleotide sequence ID" value="NC_003923.1"/>
</dbReference>
<dbReference type="SMR" id="Q8NVB7"/>
<dbReference type="KEGG" id="sam:MW2138"/>
<dbReference type="HOGENOM" id="CLU_014673_0_1_9"/>
<dbReference type="GO" id="GO:0003723">
    <property type="term" value="F:RNA binding"/>
    <property type="evidence" value="ECO:0007669"/>
    <property type="project" value="InterPro"/>
</dbReference>
<dbReference type="GO" id="GO:0160147">
    <property type="term" value="F:tRNA pseudouridine(38-40) synthase activity"/>
    <property type="evidence" value="ECO:0007669"/>
    <property type="project" value="UniProtKB-EC"/>
</dbReference>
<dbReference type="GO" id="GO:0031119">
    <property type="term" value="P:tRNA pseudouridine synthesis"/>
    <property type="evidence" value="ECO:0007669"/>
    <property type="project" value="UniProtKB-UniRule"/>
</dbReference>
<dbReference type="CDD" id="cd02570">
    <property type="entry name" value="PseudoU_synth_EcTruA"/>
    <property type="match status" value="1"/>
</dbReference>
<dbReference type="FunFam" id="3.30.70.580:FF:000001">
    <property type="entry name" value="tRNA pseudouridine synthase A"/>
    <property type="match status" value="1"/>
</dbReference>
<dbReference type="Gene3D" id="3.30.70.660">
    <property type="entry name" value="Pseudouridine synthase I, catalytic domain, C-terminal subdomain"/>
    <property type="match status" value="1"/>
</dbReference>
<dbReference type="Gene3D" id="3.30.70.580">
    <property type="entry name" value="Pseudouridine synthase I, catalytic domain, N-terminal subdomain"/>
    <property type="match status" value="1"/>
</dbReference>
<dbReference type="HAMAP" id="MF_00171">
    <property type="entry name" value="TruA"/>
    <property type="match status" value="1"/>
</dbReference>
<dbReference type="InterPro" id="IPR020103">
    <property type="entry name" value="PsdUridine_synth_cat_dom_sf"/>
</dbReference>
<dbReference type="InterPro" id="IPR001406">
    <property type="entry name" value="PsdUridine_synth_TruA"/>
</dbReference>
<dbReference type="InterPro" id="IPR020097">
    <property type="entry name" value="PsdUridine_synth_TruA_a/b_dom"/>
</dbReference>
<dbReference type="InterPro" id="IPR020095">
    <property type="entry name" value="PsdUridine_synth_TruA_C"/>
</dbReference>
<dbReference type="InterPro" id="IPR020094">
    <property type="entry name" value="TruA/RsuA/RluB/E/F_N"/>
</dbReference>
<dbReference type="NCBIfam" id="TIGR00071">
    <property type="entry name" value="hisT_truA"/>
    <property type="match status" value="1"/>
</dbReference>
<dbReference type="PANTHER" id="PTHR11142">
    <property type="entry name" value="PSEUDOURIDYLATE SYNTHASE"/>
    <property type="match status" value="1"/>
</dbReference>
<dbReference type="PANTHER" id="PTHR11142:SF0">
    <property type="entry name" value="TRNA PSEUDOURIDINE SYNTHASE-LIKE 1"/>
    <property type="match status" value="1"/>
</dbReference>
<dbReference type="Pfam" id="PF01416">
    <property type="entry name" value="PseudoU_synth_1"/>
    <property type="match status" value="2"/>
</dbReference>
<dbReference type="PIRSF" id="PIRSF001430">
    <property type="entry name" value="tRNA_psdUrid_synth"/>
    <property type="match status" value="1"/>
</dbReference>
<dbReference type="SUPFAM" id="SSF55120">
    <property type="entry name" value="Pseudouridine synthase"/>
    <property type="match status" value="1"/>
</dbReference>
<proteinExistence type="inferred from homology"/>